<reference key="1">
    <citation type="journal article" date="2007" name="Genome Biol.">
        <title>Characterization and modeling of the Haemophilus influenzae core and supragenomes based on the complete genomic sequences of Rd and 12 clinical nontypeable strains.</title>
        <authorList>
            <person name="Hogg J.S."/>
            <person name="Hu F.Z."/>
            <person name="Janto B."/>
            <person name="Boissy R."/>
            <person name="Hayes J."/>
            <person name="Keefe R."/>
            <person name="Post J.C."/>
            <person name="Ehrlich G.D."/>
        </authorList>
    </citation>
    <scope>NUCLEOTIDE SEQUENCE [LARGE SCALE GENOMIC DNA]</scope>
    <source>
        <strain>PittEE</strain>
    </source>
</reference>
<feature type="chain" id="PRO_1000020073" description="Methionyl-tRNA formyltransferase">
    <location>
        <begin position="1"/>
        <end position="318"/>
    </location>
</feature>
<feature type="binding site" evidence="1">
    <location>
        <begin position="112"/>
        <end position="115"/>
    </location>
    <ligand>
        <name>(6S)-5,6,7,8-tetrahydrofolate</name>
        <dbReference type="ChEBI" id="CHEBI:57453"/>
    </ligand>
</feature>
<gene>
    <name evidence="1" type="primary">fmt</name>
    <name type="ordered locus">CGSHiEE_09115</name>
</gene>
<keyword id="KW-0648">Protein biosynthesis</keyword>
<keyword id="KW-0808">Transferase</keyword>
<name>FMT_HAEIE</name>
<evidence type="ECO:0000255" key="1">
    <source>
        <dbReference type="HAMAP-Rule" id="MF_00182"/>
    </source>
</evidence>
<comment type="function">
    <text evidence="1">Attaches a formyl group to the free amino group of methionyl-tRNA(fMet). The formyl group appears to play a dual role in the initiator identity of N-formylmethionyl-tRNA by promoting its recognition by IF2 and preventing the misappropriation of this tRNA by the elongation apparatus.</text>
</comment>
<comment type="catalytic activity">
    <reaction evidence="1">
        <text>L-methionyl-tRNA(fMet) + (6R)-10-formyltetrahydrofolate = N-formyl-L-methionyl-tRNA(fMet) + (6S)-5,6,7,8-tetrahydrofolate + H(+)</text>
        <dbReference type="Rhea" id="RHEA:24380"/>
        <dbReference type="Rhea" id="RHEA-COMP:9952"/>
        <dbReference type="Rhea" id="RHEA-COMP:9953"/>
        <dbReference type="ChEBI" id="CHEBI:15378"/>
        <dbReference type="ChEBI" id="CHEBI:57453"/>
        <dbReference type="ChEBI" id="CHEBI:78530"/>
        <dbReference type="ChEBI" id="CHEBI:78844"/>
        <dbReference type="ChEBI" id="CHEBI:195366"/>
        <dbReference type="EC" id="2.1.2.9"/>
    </reaction>
</comment>
<comment type="similarity">
    <text evidence="1">Belongs to the Fmt family.</text>
</comment>
<proteinExistence type="inferred from homology"/>
<protein>
    <recommendedName>
        <fullName evidence="1">Methionyl-tRNA formyltransferase</fullName>
        <ecNumber evidence="1">2.1.2.9</ecNumber>
    </recommendedName>
</protein>
<sequence length="318" mass="34814">MKSLNIIFAGTPDFAAQHLQAILNSQHNVIAVYTQPDKPAGRGKKLQASPVKQLAEQNDIPVYQPKSLRKEEVQSELKALNADVIVVVAYGLILPKVVLDAPRLGCLNVHGSILPRWRGAAPIQRSIWAGDAQTGVTIMQMDEGLDTGDMLHKVYCDILPTETSTSLYNKLAELAPSALIDVLDNLESGKFTAEKQDDSQSNYAEKLSKEEAQLDWSLPAVQLERNIRAFNPWPIAYFSTEDRDGNAQTLKVYQAEVLPHQDKPAGTILSADKNGIQIATVDGVLNLLQLQPAGKKLMSAQDLLNGRAEWFAIGKVLA</sequence>
<accession>A5UEB3</accession>
<organism>
    <name type="scientific">Haemophilus influenzae (strain PittEE)</name>
    <dbReference type="NCBI Taxonomy" id="374930"/>
    <lineage>
        <taxon>Bacteria</taxon>
        <taxon>Pseudomonadati</taxon>
        <taxon>Pseudomonadota</taxon>
        <taxon>Gammaproteobacteria</taxon>
        <taxon>Pasteurellales</taxon>
        <taxon>Pasteurellaceae</taxon>
        <taxon>Haemophilus</taxon>
    </lineage>
</organism>
<dbReference type="EC" id="2.1.2.9" evidence="1"/>
<dbReference type="EMBL" id="CP000671">
    <property type="protein sequence ID" value="ABQ99114.1"/>
    <property type="molecule type" value="Genomic_DNA"/>
</dbReference>
<dbReference type="SMR" id="A5UEB3"/>
<dbReference type="KEGG" id="hip:CGSHiEE_09115"/>
<dbReference type="HOGENOM" id="CLU_033347_1_2_6"/>
<dbReference type="GO" id="GO:0005829">
    <property type="term" value="C:cytosol"/>
    <property type="evidence" value="ECO:0007669"/>
    <property type="project" value="TreeGrafter"/>
</dbReference>
<dbReference type="GO" id="GO:0004479">
    <property type="term" value="F:methionyl-tRNA formyltransferase activity"/>
    <property type="evidence" value="ECO:0007669"/>
    <property type="project" value="UniProtKB-UniRule"/>
</dbReference>
<dbReference type="CDD" id="cd08646">
    <property type="entry name" value="FMT_core_Met-tRNA-FMT_N"/>
    <property type="match status" value="1"/>
</dbReference>
<dbReference type="CDD" id="cd08704">
    <property type="entry name" value="Met_tRNA_FMT_C"/>
    <property type="match status" value="1"/>
</dbReference>
<dbReference type="FunFam" id="3.40.50.12230:FF:000001">
    <property type="entry name" value="Methionyl-tRNA formyltransferase"/>
    <property type="match status" value="1"/>
</dbReference>
<dbReference type="FunFam" id="3.40.50.170:FF:000003">
    <property type="entry name" value="Methionyl-tRNA formyltransferase"/>
    <property type="match status" value="1"/>
</dbReference>
<dbReference type="Gene3D" id="3.10.25.10">
    <property type="entry name" value="Formyl transferase, C-terminal domain"/>
    <property type="match status" value="1"/>
</dbReference>
<dbReference type="Gene3D" id="3.40.50.170">
    <property type="entry name" value="Formyl transferase, N-terminal domain"/>
    <property type="match status" value="1"/>
</dbReference>
<dbReference type="HAMAP" id="MF_00182">
    <property type="entry name" value="Formyl_trans"/>
    <property type="match status" value="1"/>
</dbReference>
<dbReference type="InterPro" id="IPR005794">
    <property type="entry name" value="Fmt"/>
</dbReference>
<dbReference type="InterPro" id="IPR005793">
    <property type="entry name" value="Formyl_trans_C"/>
</dbReference>
<dbReference type="InterPro" id="IPR037022">
    <property type="entry name" value="Formyl_trans_C_sf"/>
</dbReference>
<dbReference type="InterPro" id="IPR002376">
    <property type="entry name" value="Formyl_transf_N"/>
</dbReference>
<dbReference type="InterPro" id="IPR036477">
    <property type="entry name" value="Formyl_transf_N_sf"/>
</dbReference>
<dbReference type="InterPro" id="IPR011034">
    <property type="entry name" value="Formyl_transferase-like_C_sf"/>
</dbReference>
<dbReference type="InterPro" id="IPR001555">
    <property type="entry name" value="GART_AS"/>
</dbReference>
<dbReference type="InterPro" id="IPR044135">
    <property type="entry name" value="Met-tRNA-FMT_C"/>
</dbReference>
<dbReference type="InterPro" id="IPR041711">
    <property type="entry name" value="Met-tRNA-FMT_N"/>
</dbReference>
<dbReference type="NCBIfam" id="TIGR00460">
    <property type="entry name" value="fmt"/>
    <property type="match status" value="1"/>
</dbReference>
<dbReference type="PANTHER" id="PTHR11138">
    <property type="entry name" value="METHIONYL-TRNA FORMYLTRANSFERASE"/>
    <property type="match status" value="1"/>
</dbReference>
<dbReference type="PANTHER" id="PTHR11138:SF5">
    <property type="entry name" value="METHIONYL-TRNA FORMYLTRANSFERASE, MITOCHONDRIAL"/>
    <property type="match status" value="1"/>
</dbReference>
<dbReference type="Pfam" id="PF02911">
    <property type="entry name" value="Formyl_trans_C"/>
    <property type="match status" value="1"/>
</dbReference>
<dbReference type="Pfam" id="PF00551">
    <property type="entry name" value="Formyl_trans_N"/>
    <property type="match status" value="1"/>
</dbReference>
<dbReference type="SUPFAM" id="SSF50486">
    <property type="entry name" value="FMT C-terminal domain-like"/>
    <property type="match status" value="1"/>
</dbReference>
<dbReference type="SUPFAM" id="SSF53328">
    <property type="entry name" value="Formyltransferase"/>
    <property type="match status" value="1"/>
</dbReference>
<dbReference type="PROSITE" id="PS00373">
    <property type="entry name" value="GART"/>
    <property type="match status" value="1"/>
</dbReference>